<evidence type="ECO:0000305" key="1"/>
<dbReference type="EMBL" id="AJ406947">
    <property type="protein sequence ID" value="CAC27586.1"/>
    <property type="molecule type" value="mRNA"/>
</dbReference>
<dbReference type="EMBL" id="BC074918">
    <property type="protein sequence ID" value="AAH74918.1"/>
    <property type="molecule type" value="mRNA"/>
</dbReference>
<dbReference type="EMBL" id="BC074919">
    <property type="protein sequence ID" value="AAH74919.1"/>
    <property type="molecule type" value="mRNA"/>
</dbReference>
<dbReference type="CCDS" id="CCDS11385.1"/>
<dbReference type="RefSeq" id="NP_114168.1">
    <property type="nucleotide sequence ID" value="NM_031962.3"/>
</dbReference>
<dbReference type="BioGRID" id="123811">
    <property type="interactions" value="140"/>
</dbReference>
<dbReference type="FunCoup" id="Q9BYQ3">
    <property type="interactions" value="57"/>
</dbReference>
<dbReference type="IntAct" id="Q9BYQ3">
    <property type="interactions" value="122"/>
</dbReference>
<dbReference type="STRING" id="9606.ENSP00000392189"/>
<dbReference type="BioMuta" id="KRTAP9-3"/>
<dbReference type="DMDM" id="38372388"/>
<dbReference type="MassIVE" id="Q9BYQ3"/>
<dbReference type="PaxDb" id="9606-ENSP00000392189"/>
<dbReference type="PeptideAtlas" id="Q9BYQ3"/>
<dbReference type="ProteomicsDB" id="79683"/>
<dbReference type="DNASU" id="83900"/>
<dbReference type="Ensembl" id="ENST00000411528.4">
    <property type="protein sequence ID" value="ENSP00000392189.2"/>
    <property type="gene ID" value="ENSG00000204873.5"/>
</dbReference>
<dbReference type="Ensembl" id="ENST00000571096.2">
    <property type="protein sequence ID" value="ENSP00000458819.1"/>
    <property type="gene ID" value="ENSG00000262749.2"/>
</dbReference>
<dbReference type="Ensembl" id="ENST00000709611.1">
    <property type="protein sequence ID" value="ENSP00000517796.1"/>
    <property type="gene ID" value="ENSG00000292047.1"/>
</dbReference>
<dbReference type="GeneID" id="83900"/>
<dbReference type="KEGG" id="hsa:83900"/>
<dbReference type="MANE-Select" id="ENST00000411528.4">
    <property type="protein sequence ID" value="ENSP00000392189.2"/>
    <property type="RefSeq nucleotide sequence ID" value="NM_031962.3"/>
    <property type="RefSeq protein sequence ID" value="NP_114168.1"/>
</dbReference>
<dbReference type="UCSC" id="uc021txg.1">
    <property type="organism name" value="human"/>
</dbReference>
<dbReference type="AGR" id="HGNC:16927"/>
<dbReference type="CTD" id="83900"/>
<dbReference type="GeneCards" id="KRTAP9-3"/>
<dbReference type="HGNC" id="HGNC:16927">
    <property type="gene designation" value="KRTAP9-3"/>
</dbReference>
<dbReference type="HPA" id="ENSG00000204873">
    <property type="expression patterns" value="Tissue enriched (skin)"/>
</dbReference>
<dbReference type="neXtProt" id="NX_Q9BYQ3"/>
<dbReference type="OpenTargets" id="ENSG00000204873"/>
<dbReference type="PharmGKB" id="PA38425"/>
<dbReference type="VEuPathDB" id="HostDB:ENSG00000204873"/>
<dbReference type="eggNOG" id="KOG4726">
    <property type="taxonomic scope" value="Eukaryota"/>
</dbReference>
<dbReference type="GeneTree" id="ENSGT00940000156135"/>
<dbReference type="HOGENOM" id="CLU_113141_2_0_1"/>
<dbReference type="InParanoid" id="Q9BYQ3"/>
<dbReference type="OMA" id="CETICCR"/>
<dbReference type="PAN-GO" id="Q9BYQ3">
    <property type="GO annotations" value="0 GO annotations based on evolutionary models"/>
</dbReference>
<dbReference type="PhylomeDB" id="Q9BYQ3"/>
<dbReference type="TreeFam" id="TF351356"/>
<dbReference type="PathwayCommons" id="Q9BYQ3"/>
<dbReference type="Reactome" id="R-HSA-6805567">
    <property type="pathway name" value="Keratinization"/>
</dbReference>
<dbReference type="SignaLink" id="Q9BYQ3"/>
<dbReference type="BioGRID-ORCS" id="83900">
    <property type="hits" value="10 hits in 1073 CRISPR screens"/>
</dbReference>
<dbReference type="GenomeRNAi" id="83900"/>
<dbReference type="Pharos" id="Q9BYQ3">
    <property type="development level" value="Tdark"/>
</dbReference>
<dbReference type="PRO" id="PR:Q9BYQ3"/>
<dbReference type="Proteomes" id="UP000005640">
    <property type="component" value="Chromosome 17"/>
</dbReference>
<dbReference type="RNAct" id="Q9BYQ3">
    <property type="molecule type" value="protein"/>
</dbReference>
<dbReference type="Bgee" id="ENSG00000204873">
    <property type="expression patterns" value="Expressed in skin of abdomen and 19 other cell types or tissues"/>
</dbReference>
<dbReference type="GO" id="GO:0005829">
    <property type="term" value="C:cytosol"/>
    <property type="evidence" value="ECO:0000304"/>
    <property type="project" value="Reactome"/>
</dbReference>
<dbReference type="GO" id="GO:0045095">
    <property type="term" value="C:keratin filament"/>
    <property type="evidence" value="ECO:0007669"/>
    <property type="project" value="InterPro"/>
</dbReference>
<dbReference type="GO" id="GO:0042802">
    <property type="term" value="F:identical protein binding"/>
    <property type="evidence" value="ECO:0000353"/>
    <property type="project" value="IntAct"/>
</dbReference>
<dbReference type="InterPro" id="IPR002494">
    <property type="entry name" value="KAP"/>
</dbReference>
<dbReference type="Pfam" id="PF13885">
    <property type="entry name" value="Keratin_B2_2"/>
    <property type="match status" value="3"/>
</dbReference>
<proteinExistence type="evidence at protein level"/>
<organism>
    <name type="scientific">Homo sapiens</name>
    <name type="common">Human</name>
    <dbReference type="NCBI Taxonomy" id="9606"/>
    <lineage>
        <taxon>Eukaryota</taxon>
        <taxon>Metazoa</taxon>
        <taxon>Chordata</taxon>
        <taxon>Craniata</taxon>
        <taxon>Vertebrata</taxon>
        <taxon>Euteleostomi</taxon>
        <taxon>Mammalia</taxon>
        <taxon>Eutheria</taxon>
        <taxon>Euarchontoglires</taxon>
        <taxon>Primates</taxon>
        <taxon>Haplorrhini</taxon>
        <taxon>Catarrhini</taxon>
        <taxon>Hominidae</taxon>
        <taxon>Homo</taxon>
    </lineage>
</organism>
<name>KRA93_HUMAN</name>
<protein>
    <recommendedName>
        <fullName>Keratin-associated protein 9-3</fullName>
    </recommendedName>
    <alternativeName>
        <fullName>Keratin-associated protein 9.3</fullName>
    </alternativeName>
    <alternativeName>
        <fullName>Ultrahigh sulfur keratin-associated protein 9.3</fullName>
    </alternativeName>
</protein>
<feature type="chain" id="PRO_0000185189" description="Keratin-associated protein 9-3">
    <location>
        <begin position="1"/>
        <end position="159"/>
    </location>
</feature>
<feature type="repeat" description="1">
    <location>
        <begin position="8"/>
        <end position="12"/>
    </location>
</feature>
<feature type="repeat" description="2">
    <location>
        <begin position="13"/>
        <end position="17"/>
    </location>
</feature>
<feature type="repeat" description="3">
    <location>
        <begin position="32"/>
        <end position="36"/>
    </location>
</feature>
<feature type="repeat" description="4">
    <location>
        <begin position="37"/>
        <end position="41"/>
    </location>
</feature>
<feature type="repeat" description="5">
    <location>
        <begin position="46"/>
        <end position="50"/>
    </location>
</feature>
<feature type="repeat" description="6">
    <location>
        <begin position="51"/>
        <end position="55"/>
    </location>
</feature>
<feature type="repeat" description="7">
    <location>
        <begin position="56"/>
        <end position="60"/>
    </location>
</feature>
<feature type="repeat" description="8">
    <location>
        <begin position="61"/>
        <end position="65"/>
    </location>
</feature>
<feature type="repeat" description="9">
    <location>
        <begin position="70"/>
        <end position="74"/>
    </location>
</feature>
<feature type="repeat" description="10">
    <location>
        <begin position="75"/>
        <end position="79"/>
    </location>
</feature>
<feature type="repeat" description="11">
    <location>
        <begin position="80"/>
        <end position="84"/>
    </location>
</feature>
<feature type="repeat" description="12">
    <location>
        <begin position="85"/>
        <end position="89"/>
    </location>
</feature>
<feature type="repeat" description="13">
    <location>
        <begin position="129"/>
        <end position="133"/>
    </location>
</feature>
<feature type="repeat" description="14">
    <location>
        <begin position="134"/>
        <end position="138"/>
    </location>
</feature>
<feature type="repeat" description="15">
    <location>
        <begin position="139"/>
        <end position="143"/>
    </location>
</feature>
<feature type="repeat" description="16">
    <location>
        <begin position="153"/>
        <end position="157"/>
    </location>
</feature>
<feature type="region of interest" description="16 X 5 AA repeats of C-C-[RQVSHE]-[SPTN]-[TASPI]">
    <location>
        <begin position="8"/>
        <end position="157"/>
    </location>
</feature>
<accession>Q9BYQ3</accession>
<keyword id="KW-0416">Keratin</keyword>
<keyword id="KW-1267">Proteomics identification</keyword>
<keyword id="KW-1185">Reference proteome</keyword>
<keyword id="KW-0677">Repeat</keyword>
<reference key="1">
    <citation type="journal article" date="2001" name="J. Biol. Chem.">
        <title>Characterization of a cluster of human high/ultrahigh sulfur keratin-associated protein genes embedded in the type I keratin gene domain on chromosome 17q12-21.</title>
        <authorList>
            <person name="Rogers M.A."/>
            <person name="Langbein L."/>
            <person name="Winter H."/>
            <person name="Ehmann C."/>
            <person name="Praetzel S."/>
            <person name="Korn B."/>
            <person name="Schweizer J."/>
        </authorList>
    </citation>
    <scope>NUCLEOTIDE SEQUENCE [MRNA]</scope>
    <source>
        <tissue>Scalp</tissue>
    </source>
</reference>
<reference key="2">
    <citation type="journal article" date="2004" name="Genome Res.">
        <title>The status, quality, and expansion of the NIH full-length cDNA project: the Mammalian Gene Collection (MGC).</title>
        <authorList>
            <consortium name="The MGC Project Team"/>
        </authorList>
    </citation>
    <scope>NUCLEOTIDE SEQUENCE [LARGE SCALE MRNA]</scope>
</reference>
<sequence>MTHCCSPCCQPTCCRTTCWQPTTVTTCSSTPCCQPSCCVSSCCQPCCHPTCCQNTCCRTTCCQPICVTSCCQPSCCSTPCCQPTCCGSSCGQSSSCAPVYCRRTCYHPTSVCLPGCLNQSCGSNCCQPCCRPACCETTCCRTTCFQPTCVYSCCQPSCC</sequence>
<comment type="function">
    <text>In the hair cortex, hair keratin intermediate filaments are embedded in an interfilamentous matrix, consisting of hair keratin-associated proteins (KRTAP), which are essential for the formation of a rigid and resistant hair shaft through their extensive disulfide bond cross-linking with abundant cysteine residues of hair keratins. The matrix proteins include the high-sulfur and high-glycine-tyrosine keratins.</text>
</comment>
<comment type="subunit">
    <text>Interacts with hair keratins.</text>
</comment>
<comment type="interaction">
    <interactant intactId="EBI-1043191">
        <id>Q9BYQ3</id>
    </interactant>
    <interactant intactId="EBI-10173507">
        <id>Q6UY14-3</id>
        <label>ADAMTSL4</label>
    </interactant>
    <organismsDiffer>false</organismsDiffer>
    <experiments>3</experiments>
</comment>
<comment type="interaction">
    <interactant intactId="EBI-1043191">
        <id>Q9BYQ3</id>
    </interactant>
    <interactant intactId="EBI-11954519">
        <id>Q49AR9</id>
        <label>ANKS1A</label>
    </interactant>
    <organismsDiffer>false</organismsDiffer>
    <experiments>3</experiments>
</comment>
<comment type="interaction">
    <interactant intactId="EBI-1043191">
        <id>Q9BYQ3</id>
    </interactant>
    <interactant intactId="EBI-11954292">
        <id>Q86V38</id>
        <label>ATN1</label>
    </interactant>
    <organismsDiffer>false</organismsDiffer>
    <experiments>3</experiments>
</comment>
<comment type="interaction">
    <interactant intactId="EBI-1043191">
        <id>Q9BYQ3</id>
    </interactant>
    <interactant intactId="EBI-3866279">
        <id>Q9BWT7</id>
        <label>CARD10</label>
    </interactant>
    <organismsDiffer>false</organismsDiffer>
    <experiments>3</experiments>
</comment>
<comment type="interaction">
    <interactant intactId="EBI-1043191">
        <id>Q9BYQ3</id>
    </interactant>
    <interactant intactId="EBI-744545">
        <id>Q8NEC5</id>
        <label>CATSPER1</label>
    </interactant>
    <organismsDiffer>false</organismsDiffer>
    <experiments>3</experiments>
</comment>
<comment type="interaction">
    <interactant intactId="EBI-1043191">
        <id>Q9BYQ3</id>
    </interactant>
    <interactant intactId="EBI-746041">
        <id>Q8TC90</id>
        <label>CCER1</label>
    </interactant>
    <organismsDiffer>false</organismsDiffer>
    <experiments>3</experiments>
</comment>
<comment type="interaction">
    <interactant intactId="EBI-1043191">
        <id>Q9BYQ3</id>
    </interactant>
    <interactant intactId="EBI-12139335">
        <id>Q8N6W0</id>
        <label>CELF5</label>
    </interactant>
    <organismsDiffer>false</organismsDiffer>
    <experiments>3</experiments>
</comment>
<comment type="interaction">
    <interactant intactId="EBI-1043191">
        <id>Q9BYQ3</id>
    </interactant>
    <interactant intactId="EBI-12261896">
        <id>Q5T4B2</id>
        <label>CERCAM</label>
    </interactant>
    <organismsDiffer>false</organismsDiffer>
    <experiments>3</experiments>
</comment>
<comment type="interaction">
    <interactant intactId="EBI-1043191">
        <id>Q9BYQ3</id>
    </interactant>
    <interactant intactId="EBI-947551">
        <id>Q9H2X0</id>
        <label>CHRD</label>
    </interactant>
    <organismsDiffer>false</organismsDiffer>
    <experiments>3</experiments>
</comment>
<comment type="interaction">
    <interactant intactId="EBI-1043191">
        <id>Q9BYQ3</id>
    </interactant>
    <interactant intactId="EBI-11979451">
        <id>P07510-2</id>
        <label>CHRNG</label>
    </interactant>
    <organismsDiffer>false</organismsDiffer>
    <experiments>3</experiments>
</comment>
<comment type="interaction">
    <interactant intactId="EBI-1043191">
        <id>Q9BYQ3</id>
    </interactant>
    <interactant intactId="EBI-741032">
        <id>Q8NE01</id>
        <label>CNNM3</label>
    </interactant>
    <organismsDiffer>false</organismsDiffer>
    <experiments>3</experiments>
</comment>
<comment type="interaction">
    <interactant intactId="EBI-1043191">
        <id>Q9BYQ3</id>
    </interactant>
    <interactant intactId="EBI-747133">
        <id>P27658</id>
        <label>COL8A1</label>
    </interactant>
    <organismsDiffer>false</organismsDiffer>
    <experiments>3</experiments>
</comment>
<comment type="interaction">
    <interactant intactId="EBI-1043191">
        <id>Q9BYQ3</id>
    </interactant>
    <interactant intactId="EBI-713677">
        <id>Q9UGL9</id>
        <label>CRCT1</label>
    </interactant>
    <organismsDiffer>false</organismsDiffer>
    <experiments>3</experiments>
</comment>
<comment type="interaction">
    <interactant intactId="EBI-1043191">
        <id>Q9BYQ3</id>
    </interactant>
    <interactant intactId="EBI-10192698">
        <id>Q02930-3</id>
        <label>CREB5</label>
    </interactant>
    <organismsDiffer>false</organismsDiffer>
    <experiments>3</experiments>
</comment>
<comment type="interaction">
    <interactant intactId="EBI-1043191">
        <id>Q9BYQ3</id>
    </interactant>
    <interactant intactId="EBI-3870390">
        <id>P06850</id>
        <label>CRH</label>
    </interactant>
    <organismsDiffer>false</organismsDiffer>
    <experiments>3</experiments>
</comment>
<comment type="interaction">
    <interactant intactId="EBI-1043191">
        <id>Q9BYQ3</id>
    </interactant>
    <interactant intactId="EBI-3867333">
        <id>A8MQ03</id>
        <label>CYSRT1</label>
    </interactant>
    <organismsDiffer>false</organismsDiffer>
    <experiments>3</experiments>
</comment>
<comment type="interaction">
    <interactant intactId="EBI-1043191">
        <id>Q9BYQ3</id>
    </interactant>
    <interactant intactId="EBI-10303987">
        <id>Q9UHG0</id>
        <label>DCDC2</label>
    </interactant>
    <organismsDiffer>false</organismsDiffer>
    <experiments>3</experiments>
</comment>
<comment type="interaction">
    <interactant intactId="EBI-1043191">
        <id>Q9BYQ3</id>
    </interactant>
    <interactant intactId="EBI-9679045">
        <id>Q9NQL9</id>
        <label>DMRT3</label>
    </interactant>
    <organismsDiffer>false</organismsDiffer>
    <experiments>3</experiments>
</comment>
<comment type="interaction">
    <interactant intactId="EBI-1043191">
        <id>Q9BYQ3</id>
    </interactant>
    <interactant intactId="EBI-448771">
        <id>Q92608</id>
        <label>DOCK2</label>
    </interactant>
    <organismsDiffer>false</organismsDiffer>
    <experiments>3</experiments>
</comment>
<comment type="interaction">
    <interactant intactId="EBI-1043191">
        <id>Q9BYQ3</id>
    </interactant>
    <interactant intactId="EBI-947964">
        <id>Q16610</id>
        <label>ECM1</label>
    </interactant>
    <organismsDiffer>false</organismsDiffer>
    <experiments>3</experiments>
</comment>
<comment type="interaction">
    <interactant intactId="EBI-1043191">
        <id>Q9BYQ3</id>
    </interactant>
    <interactant intactId="EBI-11986315">
        <id>Q9H5Z6-2</id>
        <label>FAM124B</label>
    </interactant>
    <organismsDiffer>false</organismsDiffer>
    <experiments>3</experiments>
</comment>
<comment type="interaction">
    <interactant intactId="EBI-1043191">
        <id>Q9BYQ3</id>
    </interactant>
    <interactant intactId="EBI-719816">
        <id>Q9NWN3</id>
        <label>FBXO34</label>
    </interactant>
    <organismsDiffer>false</organismsDiffer>
    <experiments>3</experiments>
</comment>
<comment type="interaction">
    <interactant intactId="EBI-1043191">
        <id>Q9BYQ3</id>
    </interactant>
    <interactant intactId="EBI-741068">
        <id>Q969U6</id>
        <label>FBXW5</label>
    </interactant>
    <organismsDiffer>false</organismsDiffer>
    <experiments>3</experiments>
</comment>
<comment type="interaction">
    <interactant intactId="EBI-1043191">
        <id>Q9BYQ3</id>
    </interactant>
    <interactant intactId="EBI-711823">
        <id>Q7L5D6</id>
        <label>GET4</label>
    </interactant>
    <organismsDiffer>false</organismsDiffer>
    <experiments>3</experiments>
</comment>
<comment type="interaction">
    <interactant intactId="EBI-1043191">
        <id>Q9BYQ3</id>
    </interactant>
    <interactant intactId="EBI-374781">
        <id>O76003</id>
        <label>GLRX3</label>
    </interactant>
    <organismsDiffer>false</organismsDiffer>
    <experiments>3</experiments>
</comment>
<comment type="interaction">
    <interactant intactId="EBI-1043191">
        <id>Q9BYQ3</id>
    </interactant>
    <interactant intactId="EBI-11975289">
        <id>Q9Y223-2</id>
        <label>GNE</label>
    </interactant>
    <organismsDiffer>false</organismsDiffer>
    <experiments>3</experiments>
</comment>
<comment type="interaction">
    <interactant intactId="EBI-1043191">
        <id>Q9BYQ3</id>
    </interactant>
    <interactant intactId="EBI-740785">
        <id>P49639</id>
        <label>HOXA1</label>
    </interactant>
    <organismsDiffer>false</organismsDiffer>
    <experiments>8</experiments>
</comment>
<comment type="interaction">
    <interactant intactId="EBI-1043191">
        <id>Q9BYQ3</id>
    </interactant>
    <interactant intactId="EBI-742314">
        <id>P31269</id>
        <label>HOXA9</label>
    </interactant>
    <organismsDiffer>false</organismsDiffer>
    <experiments>3</experiments>
</comment>
<comment type="interaction">
    <interactant intactId="EBI-1043191">
        <id>Q9BYQ3</id>
    </interactant>
    <interactant intactId="EBI-6509505">
        <id>Q0VD86</id>
        <label>INCA1</label>
    </interactant>
    <organismsDiffer>false</organismsDiffer>
    <experiments>3</experiments>
</comment>
<comment type="interaction">
    <interactant intactId="EBI-1043191">
        <id>Q9BYQ3</id>
    </interactant>
    <interactant intactId="EBI-11051601">
        <id>P16144-2</id>
        <label>ITGB4</label>
    </interactant>
    <organismsDiffer>false</organismsDiffer>
    <experiments>3</experiments>
</comment>
<comment type="interaction">
    <interactant intactId="EBI-1043191">
        <id>Q9BYQ3</id>
    </interactant>
    <interactant intactId="EBI-2510602">
        <id>Q15040</id>
        <label>JOSD1</label>
    </interactant>
    <organismsDiffer>false</organismsDiffer>
    <experiments>3</experiments>
</comment>
<comment type="interaction">
    <interactant intactId="EBI-1043191">
        <id>Q9BYQ3</id>
    </interactant>
    <interactant intactId="EBI-6426443">
        <id>Q2WGJ6</id>
        <label>KLHL38</label>
    </interactant>
    <organismsDiffer>false</organismsDiffer>
    <experiments>3</experiments>
</comment>
<comment type="interaction">
    <interactant intactId="EBI-1043191">
        <id>Q9BYQ3</id>
    </interactant>
    <interactant intactId="EBI-948001">
        <id>Q15323</id>
        <label>KRT31</label>
    </interactant>
    <organismsDiffer>false</organismsDiffer>
    <experiments>3</experiments>
</comment>
<comment type="interaction">
    <interactant intactId="EBI-1043191">
        <id>Q9BYQ3</id>
    </interactant>
    <interactant intactId="EBI-11959885">
        <id>Q07627</id>
        <label>KRTAP1-1</label>
    </interactant>
    <organismsDiffer>false</organismsDiffer>
    <experiments>3</experiments>
</comment>
<comment type="interaction">
    <interactant intactId="EBI-1043191">
        <id>Q9BYQ3</id>
    </interactant>
    <interactant intactId="EBI-11749135">
        <id>Q8IUG1</id>
        <label>KRTAP1-3</label>
    </interactant>
    <organismsDiffer>false</organismsDiffer>
    <experiments>3</experiments>
</comment>
<comment type="interaction">
    <interactant intactId="EBI-1043191">
        <id>Q9BYQ3</id>
    </interactant>
    <interactant intactId="EBI-11955579">
        <id>P60014</id>
        <label>KRTAP10-10</label>
    </interactant>
    <organismsDiffer>false</organismsDiffer>
    <experiments>3</experiments>
</comment>
<comment type="interaction">
    <interactant intactId="EBI-1043191">
        <id>Q9BYQ3</id>
    </interactant>
    <interactant intactId="EBI-10217483">
        <id>P60412</id>
        <label>KRTAP10-11</label>
    </interactant>
    <organismsDiffer>false</organismsDiffer>
    <experiments>3</experiments>
</comment>
<comment type="interaction">
    <interactant intactId="EBI-1043191">
        <id>Q9BYQ3</id>
    </interactant>
    <interactant intactId="EBI-10172150">
        <id>P60370</id>
        <label>KRTAP10-5</label>
    </interactant>
    <organismsDiffer>false</organismsDiffer>
    <experiments>3</experiments>
</comment>
<comment type="interaction">
    <interactant intactId="EBI-1043191">
        <id>Q9BYQ3</id>
    </interactant>
    <interactant intactId="EBI-10172290">
        <id>P60409</id>
        <label>KRTAP10-7</label>
    </interactant>
    <organismsDiffer>false</organismsDiffer>
    <experiments>3</experiments>
</comment>
<comment type="interaction">
    <interactant intactId="EBI-1043191">
        <id>Q9BYQ3</id>
    </interactant>
    <interactant intactId="EBI-10171774">
        <id>P60410</id>
        <label>KRTAP10-8</label>
    </interactant>
    <organismsDiffer>false</organismsDiffer>
    <experiments>3</experiments>
</comment>
<comment type="interaction">
    <interactant intactId="EBI-1043191">
        <id>Q9BYQ3</id>
    </interactant>
    <interactant intactId="EBI-10172052">
        <id>P60411</id>
        <label>KRTAP10-9</label>
    </interactant>
    <organismsDiffer>false</organismsDiffer>
    <experiments>6</experiments>
</comment>
<comment type="interaction">
    <interactant intactId="EBI-1043191">
        <id>Q9BYQ3</id>
    </interactant>
    <interactant intactId="EBI-1052037">
        <id>Q8IUC1</id>
        <label>KRTAP11-1</label>
    </interactant>
    <organismsDiffer>false</organismsDiffer>
    <experiments>3</experiments>
</comment>
<comment type="interaction">
    <interactant intactId="EBI-1043191">
        <id>Q9BYQ3</id>
    </interactant>
    <interactant intactId="EBI-10210845">
        <id>P59990</id>
        <label>KRTAP12-1</label>
    </interactant>
    <organismsDiffer>false</organismsDiffer>
    <experiments>3</experiments>
</comment>
<comment type="interaction">
    <interactant intactId="EBI-1043191">
        <id>Q9BYQ3</id>
    </interactant>
    <interactant intactId="EBI-10176379">
        <id>P59991</id>
        <label>KRTAP12-2</label>
    </interactant>
    <organismsDiffer>false</organismsDiffer>
    <experiments>3</experiments>
</comment>
<comment type="interaction">
    <interactant intactId="EBI-1043191">
        <id>Q9BYQ3</id>
    </interactant>
    <interactant intactId="EBI-10241252">
        <id>Q3SY46</id>
        <label>KRTAP13-3</label>
    </interactant>
    <organismsDiffer>false</organismsDiffer>
    <experiments>3</experiments>
</comment>
<comment type="interaction">
    <interactant intactId="EBI-1043191">
        <id>Q9BYQ3</id>
    </interactant>
    <interactant intactId="EBI-12196745">
        <id>Q3LHN2</id>
        <label>KRTAP19-2</label>
    </interactant>
    <organismsDiffer>false</organismsDiffer>
    <experiments>3</experiments>
</comment>
<comment type="interaction">
    <interactant intactId="EBI-1043191">
        <id>Q9BYQ3</id>
    </interactant>
    <interactant intactId="EBI-12805508">
        <id>Q3LI70</id>
        <label>KRTAP19-6</label>
    </interactant>
    <organismsDiffer>false</organismsDiffer>
    <experiments>3</experiments>
</comment>
<comment type="interaction">
    <interactant intactId="EBI-1043191">
        <id>Q9BYQ3</id>
    </interactant>
    <interactant intactId="EBI-14065470">
        <id>Q9BYR9</id>
        <label>KRTAP2-4</label>
    </interactant>
    <organismsDiffer>false</organismsDiffer>
    <experiments>3</experiments>
</comment>
<comment type="interaction">
    <interactant intactId="EBI-1043191">
        <id>Q9BYQ3</id>
    </interactant>
    <interactant intactId="EBI-9996449">
        <id>Q9BYR8</id>
        <label>KRTAP3-1</label>
    </interactant>
    <organismsDiffer>false</organismsDiffer>
    <experiments>3</experiments>
</comment>
<comment type="interaction">
    <interactant intactId="EBI-1043191">
        <id>Q9BYQ3</id>
    </interactant>
    <interactant intactId="EBI-751260">
        <id>Q9BYR7</id>
        <label>KRTAP3-2</label>
    </interactant>
    <organismsDiffer>false</organismsDiffer>
    <experiments>3</experiments>
</comment>
<comment type="interaction">
    <interactant intactId="EBI-1043191">
        <id>Q9BYQ3</id>
    </interactant>
    <interactant intactId="EBI-3957694">
        <id>Q9BYR6</id>
        <label>KRTAP3-3</label>
    </interactant>
    <organismsDiffer>false</organismsDiffer>
    <experiments>3</experiments>
</comment>
<comment type="interaction">
    <interactant intactId="EBI-1043191">
        <id>Q9BYQ3</id>
    </interactant>
    <interactant intactId="EBI-34579671">
        <id>Q9BYQ7</id>
        <label>KRTAP4-1</label>
    </interactant>
    <organismsDiffer>false</organismsDiffer>
    <experiments>3</experiments>
</comment>
<comment type="interaction">
    <interactant intactId="EBI-1043191">
        <id>Q9BYQ3</id>
    </interactant>
    <interactant intactId="EBI-739863">
        <id>Q9BQ66</id>
        <label>KRTAP4-12</label>
    </interactant>
    <organismsDiffer>false</organismsDiffer>
    <experiments>3</experiments>
</comment>
<comment type="interaction">
    <interactant intactId="EBI-1043191">
        <id>Q9BYQ3</id>
    </interactant>
    <interactant intactId="EBI-10172511">
        <id>Q9BYR5</id>
        <label>KRTAP4-2</label>
    </interactant>
    <organismsDiffer>false</organismsDiffer>
    <experiments>6</experiments>
</comment>
<comment type="interaction">
    <interactant intactId="EBI-1043191">
        <id>Q9BYQ3</id>
    </interactant>
    <interactant intactId="EBI-11958132">
        <id>Q9BYR3</id>
        <label>KRTAP4-4</label>
    </interactant>
    <organismsDiffer>false</organismsDiffer>
    <experiments>3</experiments>
</comment>
<comment type="interaction">
    <interactant intactId="EBI-1043191">
        <id>Q9BYQ3</id>
    </interactant>
    <interactant intactId="EBI-11993254">
        <id>Q9BYR2</id>
        <label>KRTAP4-5</label>
    </interactant>
    <organismsDiffer>false</organismsDiffer>
    <experiments>3</experiments>
</comment>
<comment type="interaction">
    <interactant intactId="EBI-1043191">
        <id>Q9BYQ3</id>
    </interactant>
    <interactant intactId="EBI-11993296">
        <id>Q6L8G4</id>
        <label>KRTAP5-11</label>
    </interactant>
    <organismsDiffer>false</organismsDiffer>
    <experiments>3</experiments>
</comment>
<comment type="interaction">
    <interactant intactId="EBI-1043191">
        <id>Q9BYQ3</id>
    </interactant>
    <interactant intactId="EBI-11974251">
        <id>Q6L8H2</id>
        <label>KRTAP5-3</label>
    </interactant>
    <organismsDiffer>false</organismsDiffer>
    <experiments>3</experiments>
</comment>
<comment type="interaction">
    <interactant intactId="EBI-1043191">
        <id>Q9BYQ3</id>
    </interactant>
    <interactant intactId="EBI-11963072">
        <id>Q6L8H1</id>
        <label>KRTAP5-4</label>
    </interactant>
    <organismsDiffer>false</organismsDiffer>
    <experiments>3</experiments>
</comment>
<comment type="interaction">
    <interactant intactId="EBI-1043191">
        <id>Q9BYQ3</id>
    </interactant>
    <interactant intactId="EBI-10250562">
        <id>Q6L8G9</id>
        <label>KRTAP5-6</label>
    </interactant>
    <organismsDiffer>false</organismsDiffer>
    <experiments>3</experiments>
</comment>
<comment type="interaction">
    <interactant intactId="EBI-1043191">
        <id>Q9BYQ3</id>
    </interactant>
    <interactant intactId="EBI-3958099">
        <id>P26371</id>
        <label>KRTAP5-9</label>
    </interactant>
    <organismsDiffer>false</organismsDiffer>
    <experiments>3</experiments>
</comment>
<comment type="interaction">
    <interactant intactId="EBI-1043191">
        <id>Q9BYQ3</id>
    </interactant>
    <interactant intactId="EBI-1044640">
        <id>Q9BYQ4</id>
        <label>KRTAP9-2</label>
    </interactant>
    <organismsDiffer>false</organismsDiffer>
    <experiments>3</experiments>
</comment>
<comment type="interaction">
    <interactant intactId="EBI-1043191">
        <id>Q9BYQ3</id>
    </interactant>
    <interactant intactId="EBI-1043191">
        <id>Q9BYQ3</id>
        <label>KRTAP9-3</label>
    </interactant>
    <organismsDiffer>false</organismsDiffer>
    <experiments>3</experiments>
</comment>
<comment type="interaction">
    <interactant intactId="EBI-1043191">
        <id>Q9BYQ3</id>
    </interactant>
    <interactant intactId="EBI-11958364">
        <id>Q9BYQ0</id>
        <label>KRTAP9-8</label>
    </interactant>
    <organismsDiffer>false</organismsDiffer>
    <experiments>6</experiments>
</comment>
<comment type="interaction">
    <interactant intactId="EBI-1043191">
        <id>Q9BYQ3</id>
    </interactant>
    <interactant intactId="EBI-11962058">
        <id>Q5T7P2</id>
        <label>LCE1A</label>
    </interactant>
    <organismsDiffer>false</organismsDiffer>
    <experiments>6</experiments>
</comment>
<comment type="interaction">
    <interactant intactId="EBI-1043191">
        <id>Q9BYQ3</id>
    </interactant>
    <interactant intactId="EBI-10245913">
        <id>Q5T7P3</id>
        <label>LCE1B</label>
    </interactant>
    <organismsDiffer>false</organismsDiffer>
    <experiments>3</experiments>
</comment>
<comment type="interaction">
    <interactant intactId="EBI-1043191">
        <id>Q9BYQ3</id>
    </interactant>
    <interactant intactId="EBI-12224199">
        <id>Q5T751</id>
        <label>LCE1C</label>
    </interactant>
    <organismsDiffer>false</organismsDiffer>
    <experiments>3</experiments>
</comment>
<comment type="interaction">
    <interactant intactId="EBI-1043191">
        <id>Q9BYQ3</id>
    </interactant>
    <interactant intactId="EBI-11741311">
        <id>Q5T752</id>
        <label>LCE1D</label>
    </interactant>
    <organismsDiffer>false</organismsDiffer>
    <experiments>4</experiments>
</comment>
<comment type="interaction">
    <interactant intactId="EBI-1043191">
        <id>Q9BYQ3</id>
    </interactant>
    <interactant intactId="EBI-11955335">
        <id>Q5T753</id>
        <label>LCE1E</label>
    </interactant>
    <organismsDiffer>false</organismsDiffer>
    <experiments>3</experiments>
</comment>
<comment type="interaction">
    <interactant intactId="EBI-1043191">
        <id>Q9BYQ3</id>
    </interactant>
    <interactant intactId="EBI-11958008">
        <id>Q5T754</id>
        <label>LCE1F</label>
    </interactant>
    <organismsDiffer>false</organismsDiffer>
    <experiments>6</experiments>
</comment>
<comment type="interaction">
    <interactant intactId="EBI-1043191">
        <id>Q9BYQ3</id>
    </interactant>
    <interactant intactId="EBI-10246607">
        <id>Q5TA79</id>
        <label>LCE2A</label>
    </interactant>
    <organismsDiffer>false</organismsDiffer>
    <experiments>3</experiments>
</comment>
<comment type="interaction">
    <interactant intactId="EBI-1043191">
        <id>Q9BYQ3</id>
    </interactant>
    <interactant intactId="EBI-11478468">
        <id>O14633</id>
        <label>LCE2B</label>
    </interactant>
    <organismsDiffer>false</organismsDiffer>
    <experiments>3</experiments>
</comment>
<comment type="interaction">
    <interactant intactId="EBI-1043191">
        <id>Q9BYQ3</id>
    </interactant>
    <interactant intactId="EBI-11973993">
        <id>Q5TA81</id>
        <label>LCE2C</label>
    </interactant>
    <organismsDiffer>false</organismsDiffer>
    <experiments>6</experiments>
</comment>
<comment type="interaction">
    <interactant intactId="EBI-1043191">
        <id>Q9BYQ3</id>
    </interactant>
    <interactant intactId="EBI-10246750">
        <id>Q5TA82</id>
        <label>LCE2D</label>
    </interactant>
    <organismsDiffer>false</organismsDiffer>
    <experiments>3</experiments>
</comment>
<comment type="interaction">
    <interactant intactId="EBI-1043191">
        <id>Q9BYQ3</id>
    </interactant>
    <interactant intactId="EBI-9394625">
        <id>Q5TA76</id>
        <label>LCE3A</label>
    </interactant>
    <organismsDiffer>false</organismsDiffer>
    <experiments>8</experiments>
</comment>
<comment type="interaction">
    <interactant intactId="EBI-1043191">
        <id>Q9BYQ3</id>
    </interactant>
    <interactant intactId="EBI-11974495">
        <id>Q5TA77</id>
        <label>LCE3B</label>
    </interactant>
    <organismsDiffer>false</organismsDiffer>
    <experiments>3</experiments>
</comment>
<comment type="interaction">
    <interactant intactId="EBI-1043191">
        <id>Q9BYQ3</id>
    </interactant>
    <interactant intactId="EBI-10245291">
        <id>Q5T5A8</id>
        <label>LCE3C</label>
    </interactant>
    <organismsDiffer>false</organismsDiffer>
    <experiments>6</experiments>
</comment>
<comment type="interaction">
    <interactant intactId="EBI-1043191">
        <id>Q9BYQ3</id>
    </interactant>
    <interactant intactId="EBI-6658837">
        <id>Q9BYE3</id>
        <label>LCE3D</label>
    </interactant>
    <organismsDiffer>false</organismsDiffer>
    <experiments>6</experiments>
</comment>
<comment type="interaction">
    <interactant intactId="EBI-1043191">
        <id>Q9BYQ3</id>
    </interactant>
    <interactant intactId="EBI-10245456">
        <id>Q5T5B0</id>
        <label>LCE3E</label>
    </interactant>
    <organismsDiffer>false</organismsDiffer>
    <experiments>6</experiments>
</comment>
<comment type="interaction">
    <interactant intactId="EBI-1043191">
        <id>Q9BYQ3</id>
    </interactant>
    <interactant intactId="EBI-10246358">
        <id>Q5TA78</id>
        <label>LCE4A</label>
    </interactant>
    <organismsDiffer>false</organismsDiffer>
    <experiments>3</experiments>
</comment>
<comment type="interaction">
    <interactant intactId="EBI-1043191">
        <id>Q9BYQ3</id>
    </interactant>
    <interactant intactId="EBI-11955689">
        <id>Q5TCM9</id>
        <label>LCE5A</label>
    </interactant>
    <organismsDiffer>false</organismsDiffer>
    <experiments>6</experiments>
</comment>
<comment type="interaction">
    <interactant intactId="EBI-1043191">
        <id>Q9BYQ3</id>
    </interactant>
    <interactant intactId="EBI-12028858">
        <id>Q8IXW0</id>
        <label>LMNTD2</label>
    </interactant>
    <organismsDiffer>false</organismsDiffer>
    <experiments>3</experiments>
</comment>
<comment type="interaction">
    <interactant intactId="EBI-1043191">
        <id>Q9BYQ3</id>
    </interactant>
    <interactant intactId="EBI-739832">
        <id>Q8TBB1</id>
        <label>LNX1</label>
    </interactant>
    <organismsDiffer>false</organismsDiffer>
    <experiments>3</experiments>
</comment>
<comment type="interaction">
    <interactant intactId="EBI-1043191">
        <id>Q9BYQ3</id>
    </interactant>
    <interactant intactId="EBI-947402">
        <id>O60336</id>
        <label>MAPKBP1</label>
    </interactant>
    <organismsDiffer>false</organismsDiffer>
    <experiments>3</experiments>
</comment>
<comment type="interaction">
    <interactant intactId="EBI-1043191">
        <id>Q9BYQ3</id>
    </interactant>
    <interactant intactId="EBI-16439278">
        <id>Q6FHY5</id>
        <label>MEOX2</label>
    </interactant>
    <organismsDiffer>false</organismsDiffer>
    <experiments>3</experiments>
</comment>
<comment type="interaction">
    <interactant intactId="EBI-1043191">
        <id>Q9BYQ3</id>
    </interactant>
    <interactant intactId="EBI-12106440">
        <id>Q9NQS3-2</id>
        <label>NECTIN3</label>
    </interactant>
    <organismsDiffer>false</organismsDiffer>
    <experiments>3</experiments>
</comment>
<comment type="interaction">
    <interactant intactId="EBI-1043191">
        <id>Q9BYQ3</id>
    </interactant>
    <interactant intactId="EBI-22310682">
        <id>P0DPK4</id>
        <label>NOTCH2NLC</label>
    </interactant>
    <organismsDiffer>false</organismsDiffer>
    <experiments>3</experiments>
</comment>
<comment type="interaction">
    <interactant intactId="EBI-1043191">
        <id>Q9BYQ3</id>
    </interactant>
    <interactant intactId="EBI-748927">
        <id>Q9NQX5</id>
        <label>NPDC1</label>
    </interactant>
    <organismsDiffer>false</organismsDiffer>
    <experiments>3</experiments>
</comment>
<comment type="interaction">
    <interactant intactId="EBI-1043191">
        <id>Q9BYQ3</id>
    </interactant>
    <interactant intactId="EBI-10250949">
        <id>Q6NSM0</id>
        <label>NR1D2</label>
    </interactant>
    <organismsDiffer>false</organismsDiffer>
    <experiments>3</experiments>
</comment>
<comment type="interaction">
    <interactant intactId="EBI-1043191">
        <id>Q9BYQ3</id>
    </interactant>
    <interactant intactId="EBI-13644623">
        <id>Q92570</id>
        <label>NR4A3</label>
    </interactant>
    <organismsDiffer>false</organismsDiffer>
    <experiments>3</experiments>
</comment>
<comment type="interaction">
    <interactant intactId="EBI-1043191">
        <id>Q9BYQ3</id>
    </interactant>
    <interactant intactId="EBI-12027160">
        <id>Q9P121-3</id>
        <label>NTM</label>
    </interactant>
    <organismsDiffer>false</organismsDiffer>
    <experiments>3</experiments>
</comment>
<comment type="interaction">
    <interactant intactId="EBI-1043191">
        <id>Q9BYQ3</id>
    </interactant>
    <interactant intactId="EBI-1210753">
        <id>Q7Z417</id>
        <label>NUFIP2</label>
    </interactant>
    <organismsDiffer>false</organismsDiffer>
    <experiments>3</experiments>
</comment>
<comment type="interaction">
    <interactant intactId="EBI-1043191">
        <id>Q9BYQ3</id>
    </interactant>
    <interactant intactId="EBI-740446">
        <id>P32242</id>
        <label>OTX1</label>
    </interactant>
    <organismsDiffer>false</organismsDiffer>
    <experiments>3</experiments>
</comment>
<comment type="interaction">
    <interactant intactId="EBI-1043191">
        <id>Q9BYQ3</id>
    </interactant>
    <interactant intactId="EBI-296331">
        <id>Q02548</id>
        <label>PAX5</label>
    </interactant>
    <organismsDiffer>false</organismsDiffer>
    <experiments>3</experiments>
</comment>
<comment type="interaction">
    <interactant intactId="EBI-1043191">
        <id>Q9BYQ3</id>
    </interactant>
    <interactant intactId="EBI-747278">
        <id>P26367</id>
        <label>PAX6</label>
    </interactant>
    <organismsDiffer>false</organismsDiffer>
    <experiments>3</experiments>
</comment>
<comment type="interaction">
    <interactant intactId="EBI-1043191">
        <id>Q9BYQ3</id>
    </interactant>
    <interactant intactId="EBI-14084211">
        <id>A2BDE7</id>
        <label>PHLDA1</label>
    </interactant>
    <organismsDiffer>false</organismsDiffer>
    <experiments>3</experiments>
</comment>
<comment type="interaction">
    <interactant intactId="EBI-1043191">
        <id>Q9BYQ3</id>
    </interactant>
    <interactant intactId="EBI-17236143">
        <id>Q12837</id>
        <label>POU4F2</label>
    </interactant>
    <organismsDiffer>false</organismsDiffer>
    <experiments>3</experiments>
</comment>
<comment type="interaction">
    <interactant intactId="EBI-1043191">
        <id>Q9BYQ3</id>
    </interactant>
    <interactant intactId="EBI-1053424">
        <id>O43741</id>
        <label>PRKAB2</label>
    </interactant>
    <organismsDiffer>false</organismsDiffer>
    <experiments>3</experiments>
</comment>
<comment type="interaction">
    <interactant intactId="EBI-1043191">
        <id>Q9BYQ3</id>
    </interactant>
    <interactant intactId="EBI-7199479">
        <id>Q8WUK0</id>
        <label>PTPMT1</label>
    </interactant>
    <organismsDiffer>false</organismsDiffer>
    <experiments>3</experiments>
</comment>
<comment type="interaction">
    <interactant intactId="EBI-1043191">
        <id>Q9BYQ3</id>
    </interactant>
    <interactant intactId="EBI-3919694">
        <id>P15151</id>
        <label>PVR</label>
    </interactant>
    <organismsDiffer>false</organismsDiffer>
    <experiments>3</experiments>
</comment>
<comment type="interaction">
    <interactant intactId="EBI-1043191">
        <id>Q9BYQ3</id>
    </interactant>
    <interactant intactId="EBI-720447">
        <id>O60896</id>
        <label>RAMP3</label>
    </interactant>
    <organismsDiffer>false</organismsDiffer>
    <experiments>3</experiments>
</comment>
<comment type="interaction">
    <interactant intactId="EBI-1043191">
        <id>Q9BYQ3</id>
    </interactant>
    <interactant intactId="EBI-10178530">
        <id>O76081-6</id>
        <label>RGS20</label>
    </interactant>
    <organismsDiffer>false</organismsDiffer>
    <experiments>3</experiments>
</comment>
<comment type="interaction">
    <interactant intactId="EBI-1043191">
        <id>Q9BYQ3</id>
    </interactant>
    <interactant intactId="EBI-749607">
        <id>Q9NR46</id>
        <label>SH3GLB2</label>
    </interactant>
    <organismsDiffer>false</organismsDiffer>
    <experiments>3</experiments>
</comment>
<comment type="interaction">
    <interactant intactId="EBI-1043191">
        <id>Q9BYQ3</id>
    </interactant>
    <interactant intactId="EBI-11955083">
        <id>Q9NUL5-4</id>
        <label>SHFL</label>
    </interactant>
    <organismsDiffer>false</organismsDiffer>
    <experiments>3</experiments>
</comment>
<comment type="interaction">
    <interactant intactId="EBI-1043191">
        <id>Q9BYQ3</id>
    </interactant>
    <interactant intactId="EBI-12002412">
        <id>Q86YT5</id>
        <label>SLC13A5</label>
    </interactant>
    <organismsDiffer>false</organismsDiffer>
    <experiments>3</experiments>
</comment>
<comment type="interaction">
    <interactant intactId="EBI-1043191">
        <id>Q9BYQ3</id>
    </interactant>
    <interactant intactId="EBI-11998660">
        <id>Q9UHI7-3</id>
        <label>SLC23A1</label>
    </interactant>
    <organismsDiffer>false</organismsDiffer>
    <experiments>3</experiments>
</comment>
<comment type="interaction">
    <interactant intactId="EBI-1043191">
        <id>Q9BYQ3</id>
    </interactant>
    <interactant intactId="EBI-6269587">
        <id>Q9H1K4</id>
        <label>SLC25A18</label>
    </interactant>
    <organismsDiffer>false</organismsDiffer>
    <experiments>3</experiments>
</comment>
<comment type="interaction">
    <interactant intactId="EBI-1043191">
        <id>Q9BYQ3</id>
    </interactant>
    <interactant intactId="EBI-750494">
        <id>P49901</id>
        <label>SMCP</label>
    </interactant>
    <organismsDiffer>false</organismsDiffer>
    <experiments>6</experiments>
</comment>
<comment type="interaction">
    <interactant intactId="EBI-1043191">
        <id>Q9BYQ3</id>
    </interactant>
    <interactant intactId="EBI-10269322">
        <id>Q8NCR6</id>
        <label>SPMIP6</label>
    </interactant>
    <organismsDiffer>false</organismsDiffer>
    <experiments>3</experiments>
</comment>
<comment type="interaction">
    <interactant intactId="EBI-1043191">
        <id>Q9BYQ3</id>
    </interactant>
    <interactant intactId="EBI-3866665">
        <id>O43609</id>
        <label>SPRY1</label>
    </interactant>
    <organismsDiffer>false</organismsDiffer>
    <experiments>3</experiments>
</comment>
<comment type="interaction">
    <interactant intactId="EBI-1043191">
        <id>Q9BYQ3</id>
    </interactant>
    <interactant intactId="EBI-11952651">
        <id>Q7Z6R9</id>
        <label>TFAP2D</label>
    </interactant>
    <organismsDiffer>false</organismsDiffer>
    <experiments>3</experiments>
</comment>
<comment type="interaction">
    <interactant intactId="EBI-1043191">
        <id>Q9BYQ3</id>
    </interactant>
    <interactant intactId="EBI-5235829">
        <id>Q8IWZ5</id>
        <label>TRIM42</label>
    </interactant>
    <organismsDiffer>false</organismsDiffer>
    <experiments>3</experiments>
</comment>
<comment type="interaction">
    <interactant intactId="EBI-1043191">
        <id>Q9BYQ3</id>
    </interactant>
    <interactant intactId="EBI-8652667">
        <id>O14817</id>
        <label>TSPAN4</label>
    </interactant>
    <organismsDiffer>false</organismsDiffer>
    <experiments>3</experiments>
</comment>
<comment type="interaction">
    <interactant intactId="EBI-1043191">
        <id>Q9BYQ3</id>
    </interactant>
    <interactant intactId="EBI-711260">
        <id>Q13432</id>
        <label>UNC119</label>
    </interactant>
    <organismsDiffer>false</organismsDiffer>
    <experiments>3</experiments>
</comment>
<comment type="interaction">
    <interactant intactId="EBI-1043191">
        <id>Q9BYQ3</id>
    </interactant>
    <interactant intactId="EBI-10249550">
        <id>Q6EMK4</id>
        <label>VASN</label>
    </interactant>
    <organismsDiffer>false</organismsDiffer>
    <experiments>6</experiments>
</comment>
<comment type="interaction">
    <interactant intactId="EBI-1043191">
        <id>Q9BYQ3</id>
    </interactant>
    <interactant intactId="EBI-11957216">
        <id>A8MV65-2</id>
        <label>VGLL3</label>
    </interactant>
    <organismsDiffer>false</organismsDiffer>
    <experiments>3</experiments>
</comment>
<comment type="interaction">
    <interactant intactId="EBI-1043191">
        <id>Q9BYQ3</id>
    </interactant>
    <interactant intactId="EBI-8058160">
        <id>O96014</id>
        <label>WNT11</label>
    </interactant>
    <organismsDiffer>false</organismsDiffer>
    <experiments>3</experiments>
</comment>
<comment type="interaction">
    <interactant intactId="EBI-1043191">
        <id>Q9BYQ3</id>
    </interactant>
    <interactant intactId="EBI-765538">
        <id>P25490</id>
        <label>YY1</label>
    </interactant>
    <organismsDiffer>false</organismsDiffer>
    <experiments>3</experiments>
</comment>
<comment type="interaction">
    <interactant intactId="EBI-1043191">
        <id>Q9BYQ3</id>
    </interactant>
    <interactant intactId="EBI-744257">
        <id>Q96IQ9</id>
        <label>ZNF414</label>
    </interactant>
    <organismsDiffer>false</organismsDiffer>
    <experiments>3</experiments>
</comment>
<comment type="interaction">
    <interactant intactId="EBI-1043191">
        <id>Q9BYQ3</id>
    </interactant>
    <interactant intactId="EBI-747580">
        <id>Q8NDP4</id>
        <label>ZNF439</label>
    </interactant>
    <organismsDiffer>false</organismsDiffer>
    <experiments>3</experiments>
</comment>
<comment type="interaction">
    <interactant intactId="EBI-1043191">
        <id>Q9BYQ3</id>
    </interactant>
    <interactant intactId="EBI-726439">
        <id>Q8IYI8</id>
        <label>ZNF440</label>
    </interactant>
    <organismsDiffer>false</organismsDiffer>
    <experiments>3</experiments>
</comment>
<comment type="interaction">
    <interactant intactId="EBI-1043191">
        <id>Q9BYQ3</id>
    </interactant>
    <interactant intactId="EBI-10486136">
        <id>Q6ZNH5</id>
        <label>ZNF497</label>
    </interactant>
    <organismsDiffer>false</organismsDiffer>
    <experiments>3</experiments>
</comment>
<comment type="interaction">
    <interactant intactId="EBI-1043191">
        <id>Q9BYQ3</id>
    </interactant>
    <interactant intactId="EBI-14069183">
        <id>Q86XF7</id>
        <label>ZNF575</label>
    </interactant>
    <organismsDiffer>false</organismsDiffer>
    <experiments>3</experiments>
</comment>
<comment type="similarity">
    <text evidence="1">Belongs to the KRTAP type 9 family.</text>
</comment>
<gene>
    <name type="primary">KRTAP9-3</name>
    <name type="synonym">KAP9.3</name>
    <name type="synonym">KRTAP9.3</name>
</gene>